<proteinExistence type="evidence at transcript level"/>
<dbReference type="EMBL" id="BC087962">
    <property type="protein sequence ID" value="AAH87962.1"/>
    <property type="molecule type" value="mRNA"/>
</dbReference>
<dbReference type="CCDS" id="CCDS27748.1"/>
<dbReference type="RefSeq" id="NP_001013040.1">
    <property type="nucleotide sequence ID" value="NM_001013022.2"/>
</dbReference>
<dbReference type="SMR" id="Q5M8M2"/>
<dbReference type="FunCoup" id="Q5M8M2">
    <property type="interactions" value="49"/>
</dbReference>
<dbReference type="STRING" id="10090.ENSMUSP00000053112"/>
<dbReference type="PhosphoSitePlus" id="Q5M8M2"/>
<dbReference type="PaxDb" id="10090-ENSMUSP00000053112"/>
<dbReference type="ProteomicsDB" id="293831"/>
<dbReference type="Antibodypedia" id="53940">
    <property type="antibodies" value="68 antibodies from 10 providers"/>
</dbReference>
<dbReference type="DNASU" id="70113"/>
<dbReference type="Ensembl" id="ENSMUST00000049968.9">
    <property type="protein sequence ID" value="ENSMUSP00000053112.8"/>
    <property type="gene ID" value="ENSMUSG00000047394.10"/>
</dbReference>
<dbReference type="GeneID" id="70113"/>
<dbReference type="KEGG" id="mmu:70113"/>
<dbReference type="UCSC" id="uc007xgm.1">
    <property type="organism name" value="mouse"/>
</dbReference>
<dbReference type="AGR" id="MGI:1917363"/>
<dbReference type="CTD" id="440836"/>
<dbReference type="MGI" id="MGI:1917363">
    <property type="gene designation" value="Cimap1b"/>
</dbReference>
<dbReference type="VEuPathDB" id="HostDB:ENSMUSG00000047394"/>
<dbReference type="eggNOG" id="ENOG502QUIJ">
    <property type="taxonomic scope" value="Eukaryota"/>
</dbReference>
<dbReference type="GeneTree" id="ENSGT00940000161995"/>
<dbReference type="HOGENOM" id="CLU_088282_1_0_1"/>
<dbReference type="InParanoid" id="Q5M8M2"/>
<dbReference type="PhylomeDB" id="Q5M8M2"/>
<dbReference type="TreeFam" id="TF325804"/>
<dbReference type="BioGRID-ORCS" id="70113">
    <property type="hits" value="1 hit in 77 CRISPR screens"/>
</dbReference>
<dbReference type="PRO" id="PR:Q5M8M2"/>
<dbReference type="Proteomes" id="UP000000589">
    <property type="component" value="Chromosome 15"/>
</dbReference>
<dbReference type="RNAct" id="Q5M8M2">
    <property type="molecule type" value="protein"/>
</dbReference>
<dbReference type="Bgee" id="ENSMUSG00000047394">
    <property type="expression patterns" value="Expressed in lumbar subsegment of spinal cord and 83 other cell types or tissues"/>
</dbReference>
<dbReference type="ExpressionAtlas" id="Q5M8M2">
    <property type="expression patterns" value="baseline and differential"/>
</dbReference>
<dbReference type="GO" id="GO:0031514">
    <property type="term" value="C:motile cilium"/>
    <property type="evidence" value="ECO:0007669"/>
    <property type="project" value="UniProtKB-SubCell"/>
</dbReference>
<dbReference type="InterPro" id="IPR051291">
    <property type="entry name" value="CIMAP"/>
</dbReference>
<dbReference type="InterPro" id="IPR010736">
    <property type="entry name" value="SHIPPO-rpt"/>
</dbReference>
<dbReference type="PANTHER" id="PTHR21580:SF19">
    <property type="entry name" value="OUTER DENSE FIBER PROTEIN 3B"/>
    <property type="match status" value="1"/>
</dbReference>
<dbReference type="PANTHER" id="PTHR21580">
    <property type="entry name" value="SHIPPO-1-RELATED"/>
    <property type="match status" value="1"/>
</dbReference>
<dbReference type="Pfam" id="PF07004">
    <property type="entry name" value="SHIPPO-rpt"/>
    <property type="match status" value="4"/>
</dbReference>
<accession>Q5M8M2</accession>
<evidence type="ECO:0000250" key="1">
    <source>
        <dbReference type="UniProtKB" id="Q920N1"/>
    </source>
</evidence>
<evidence type="ECO:0000256" key="2">
    <source>
        <dbReference type="SAM" id="MobiDB-lite"/>
    </source>
</evidence>
<evidence type="ECO:0000305" key="3"/>
<protein>
    <recommendedName>
        <fullName>Ciliary microtubule associated protein 1B</fullName>
    </recommendedName>
    <alternativeName>
        <fullName>Outer dense fiber protein 3-like protein 3</fullName>
    </alternativeName>
    <alternativeName>
        <fullName>Outer dense fiber protein 3B</fullName>
    </alternativeName>
</protein>
<organism>
    <name type="scientific">Mus musculus</name>
    <name type="common">Mouse</name>
    <dbReference type="NCBI Taxonomy" id="10090"/>
    <lineage>
        <taxon>Eukaryota</taxon>
        <taxon>Metazoa</taxon>
        <taxon>Chordata</taxon>
        <taxon>Craniata</taxon>
        <taxon>Vertebrata</taxon>
        <taxon>Euteleostomi</taxon>
        <taxon>Mammalia</taxon>
        <taxon>Eutheria</taxon>
        <taxon>Euarchontoglires</taxon>
        <taxon>Glires</taxon>
        <taxon>Rodentia</taxon>
        <taxon>Myomorpha</taxon>
        <taxon>Muroidea</taxon>
        <taxon>Muridae</taxon>
        <taxon>Murinae</taxon>
        <taxon>Mus</taxon>
        <taxon>Mus</taxon>
    </lineage>
</organism>
<gene>
    <name type="primary">Cimap1b</name>
    <name type="synonym">Odf3b</name>
    <name type="synonym">Odf3l3</name>
</gene>
<sequence>MGSEVWVGTWRPHRPRGPIAALYRGPGPKYKLPTNTGYKLHDPSRPRAPAFSFGSRPPLRHATCGPGPSYLVPARMTVRGTVGSPAFSIYGRLSHTAPVLTPGPGRYYPERARNVTYPSAPRHTIAPRNWGILAKQETPGPGSYTVPSLLGSRVISKVSAPTYSIYSRSPVGSCFEDLSKTPGPCAYHVVNPMIYKTRAPQFTMLGRTLPPRENTKKPGPASYSVDKVVWSRGSRGRG</sequence>
<comment type="subcellular location">
    <subcellularLocation>
        <location evidence="1">Cell projection</location>
        <location evidence="1">Cilium</location>
        <location evidence="1">Flagellum</location>
    </subcellularLocation>
</comment>
<comment type="similarity">
    <text evidence="3">Belongs to the CIMAP family.</text>
</comment>
<name>CMA1B_MOUSE</name>
<keyword id="KW-0966">Cell projection</keyword>
<keyword id="KW-0969">Cilium</keyword>
<keyword id="KW-0282">Flagellum</keyword>
<keyword id="KW-1185">Reference proteome</keyword>
<feature type="chain" id="PRO_0000346441" description="Ciliary microtubule associated protein 1B">
    <location>
        <begin position="1"/>
        <end position="238"/>
    </location>
</feature>
<feature type="repeat" description="STPGR">
    <location>
        <begin position="182"/>
        <end position="207"/>
    </location>
</feature>
<feature type="region of interest" description="Disordered" evidence="2">
    <location>
        <begin position="206"/>
        <end position="238"/>
    </location>
</feature>
<reference key="1">
    <citation type="journal article" date="2004" name="Genome Res.">
        <title>The status, quality, and expansion of the NIH full-length cDNA project: the Mammalian Gene Collection (MGC).</title>
        <authorList>
            <consortium name="The MGC Project Team"/>
        </authorList>
    </citation>
    <scope>NUCLEOTIDE SEQUENCE [LARGE SCALE MRNA]</scope>
    <source>
        <tissue>Liver</tissue>
    </source>
</reference>